<proteinExistence type="predicted"/>
<sequence>MSKKKSFNREYITSYYYIPFHRLEQGFYTSMEYRKVGVFKQQGKIDGHYVGVMAMEKILAM</sequence>
<name>YDZO_BACSU</name>
<feature type="chain" id="PRO_0000380075" description="Uncharacterized protein YdzO">
    <location>
        <begin position="1"/>
        <end position="61"/>
    </location>
</feature>
<protein>
    <recommendedName>
        <fullName>Uncharacterized protein YdzO</fullName>
    </recommendedName>
</protein>
<reference key="1">
    <citation type="journal article" date="1997" name="Nature">
        <title>The complete genome sequence of the Gram-positive bacterium Bacillus subtilis.</title>
        <authorList>
            <person name="Kunst F."/>
            <person name="Ogasawara N."/>
            <person name="Moszer I."/>
            <person name="Albertini A.M."/>
            <person name="Alloni G."/>
            <person name="Azevedo V."/>
            <person name="Bertero M.G."/>
            <person name="Bessieres P."/>
            <person name="Bolotin A."/>
            <person name="Borchert S."/>
            <person name="Borriss R."/>
            <person name="Boursier L."/>
            <person name="Brans A."/>
            <person name="Braun M."/>
            <person name="Brignell S.C."/>
            <person name="Bron S."/>
            <person name="Brouillet S."/>
            <person name="Bruschi C.V."/>
            <person name="Caldwell B."/>
            <person name="Capuano V."/>
            <person name="Carter N.M."/>
            <person name="Choi S.-K."/>
            <person name="Codani J.-J."/>
            <person name="Connerton I.F."/>
            <person name="Cummings N.J."/>
            <person name="Daniel R.A."/>
            <person name="Denizot F."/>
            <person name="Devine K.M."/>
            <person name="Duesterhoeft A."/>
            <person name="Ehrlich S.D."/>
            <person name="Emmerson P.T."/>
            <person name="Entian K.-D."/>
            <person name="Errington J."/>
            <person name="Fabret C."/>
            <person name="Ferrari E."/>
            <person name="Foulger D."/>
            <person name="Fritz C."/>
            <person name="Fujita M."/>
            <person name="Fujita Y."/>
            <person name="Fuma S."/>
            <person name="Galizzi A."/>
            <person name="Galleron N."/>
            <person name="Ghim S.-Y."/>
            <person name="Glaser P."/>
            <person name="Goffeau A."/>
            <person name="Golightly E.J."/>
            <person name="Grandi G."/>
            <person name="Guiseppi G."/>
            <person name="Guy B.J."/>
            <person name="Haga K."/>
            <person name="Haiech J."/>
            <person name="Harwood C.R."/>
            <person name="Henaut A."/>
            <person name="Hilbert H."/>
            <person name="Holsappel S."/>
            <person name="Hosono S."/>
            <person name="Hullo M.-F."/>
            <person name="Itaya M."/>
            <person name="Jones L.-M."/>
            <person name="Joris B."/>
            <person name="Karamata D."/>
            <person name="Kasahara Y."/>
            <person name="Klaerr-Blanchard M."/>
            <person name="Klein C."/>
            <person name="Kobayashi Y."/>
            <person name="Koetter P."/>
            <person name="Koningstein G."/>
            <person name="Krogh S."/>
            <person name="Kumano M."/>
            <person name="Kurita K."/>
            <person name="Lapidus A."/>
            <person name="Lardinois S."/>
            <person name="Lauber J."/>
            <person name="Lazarevic V."/>
            <person name="Lee S.-M."/>
            <person name="Levine A."/>
            <person name="Liu H."/>
            <person name="Masuda S."/>
            <person name="Mauel C."/>
            <person name="Medigue C."/>
            <person name="Medina N."/>
            <person name="Mellado R.P."/>
            <person name="Mizuno M."/>
            <person name="Moestl D."/>
            <person name="Nakai S."/>
            <person name="Noback M."/>
            <person name="Noone D."/>
            <person name="O'Reilly M."/>
            <person name="Ogawa K."/>
            <person name="Ogiwara A."/>
            <person name="Oudega B."/>
            <person name="Park S.-H."/>
            <person name="Parro V."/>
            <person name="Pohl T.M."/>
            <person name="Portetelle D."/>
            <person name="Porwollik S."/>
            <person name="Prescott A.M."/>
            <person name="Presecan E."/>
            <person name="Pujic P."/>
            <person name="Purnelle B."/>
            <person name="Rapoport G."/>
            <person name="Rey M."/>
            <person name="Reynolds S."/>
            <person name="Rieger M."/>
            <person name="Rivolta C."/>
            <person name="Rocha E."/>
            <person name="Roche B."/>
            <person name="Rose M."/>
            <person name="Sadaie Y."/>
            <person name="Sato T."/>
            <person name="Scanlan E."/>
            <person name="Schleich S."/>
            <person name="Schroeter R."/>
            <person name="Scoffone F."/>
            <person name="Sekiguchi J."/>
            <person name="Sekowska A."/>
            <person name="Seror S.J."/>
            <person name="Serror P."/>
            <person name="Shin B.-S."/>
            <person name="Soldo B."/>
            <person name="Sorokin A."/>
            <person name="Tacconi E."/>
            <person name="Takagi T."/>
            <person name="Takahashi H."/>
            <person name="Takemaru K."/>
            <person name="Takeuchi M."/>
            <person name="Tamakoshi A."/>
            <person name="Tanaka T."/>
            <person name="Terpstra P."/>
            <person name="Tognoni A."/>
            <person name="Tosato V."/>
            <person name="Uchiyama S."/>
            <person name="Vandenbol M."/>
            <person name="Vannier F."/>
            <person name="Vassarotti A."/>
            <person name="Viari A."/>
            <person name="Wambutt R."/>
            <person name="Wedler E."/>
            <person name="Wedler H."/>
            <person name="Weitzenegger T."/>
            <person name="Winters P."/>
            <person name="Wipat A."/>
            <person name="Yamamoto H."/>
            <person name="Yamane K."/>
            <person name="Yasumoto K."/>
            <person name="Yata K."/>
            <person name="Yoshida K."/>
            <person name="Yoshikawa H.-F."/>
            <person name="Zumstein E."/>
            <person name="Yoshikawa H."/>
            <person name="Danchin A."/>
        </authorList>
    </citation>
    <scope>NUCLEOTIDE SEQUENCE [LARGE SCALE GENOMIC DNA]</scope>
    <source>
        <strain>168</strain>
    </source>
</reference>
<accession>C0H3V9</accession>
<organism>
    <name type="scientific">Bacillus subtilis (strain 168)</name>
    <dbReference type="NCBI Taxonomy" id="224308"/>
    <lineage>
        <taxon>Bacteria</taxon>
        <taxon>Bacillati</taxon>
        <taxon>Bacillota</taxon>
        <taxon>Bacilli</taxon>
        <taxon>Bacillales</taxon>
        <taxon>Bacillaceae</taxon>
        <taxon>Bacillus</taxon>
    </lineage>
</organism>
<keyword id="KW-1185">Reference proteome</keyword>
<dbReference type="EMBL" id="AL009126">
    <property type="protein sequence ID" value="CAX52555.1"/>
    <property type="molecule type" value="Genomic_DNA"/>
</dbReference>
<dbReference type="RefSeq" id="WP_003244283.1">
    <property type="nucleotide sequence ID" value="NC_000964.3"/>
</dbReference>
<dbReference type="RefSeq" id="YP_003097684.1">
    <property type="nucleotide sequence ID" value="NC_000964.3"/>
</dbReference>
<dbReference type="SMR" id="C0H3V9"/>
<dbReference type="FunCoup" id="C0H3V9">
    <property type="interactions" value="88"/>
</dbReference>
<dbReference type="STRING" id="224308.BSU05329"/>
<dbReference type="PaxDb" id="224308-BSU05329"/>
<dbReference type="EnsemblBacteria" id="CAX52555">
    <property type="protein sequence ID" value="CAX52555"/>
    <property type="gene ID" value="BSU_05329"/>
</dbReference>
<dbReference type="GeneID" id="8303150"/>
<dbReference type="KEGG" id="bsu:BSU05329"/>
<dbReference type="PATRIC" id="fig|224308.179.peg.568"/>
<dbReference type="InParanoid" id="C0H3V9"/>
<dbReference type="OrthoDB" id="9798006at2"/>
<dbReference type="BioCyc" id="BSUB:BSU05329-MONOMER"/>
<dbReference type="Proteomes" id="UP000001570">
    <property type="component" value="Chromosome"/>
</dbReference>
<gene>
    <name type="primary">ydzO</name>
    <name type="ordered locus">BSU05329</name>
</gene>